<proteinExistence type="inferred from homology"/>
<name>SYL_NEOSM</name>
<accession>Q2GDQ6</accession>
<gene>
    <name evidence="1" type="primary">leuS</name>
    <name type="ordered locus">NSE_0506</name>
</gene>
<sequence length="831" mass="94528">MSNYDFKKIEQFSQSLWDFSSCDFQRKKYYVLSMFPYPSGKLHIGHLRNYVIGDVLARYKRSQGYNVLHPIGWDAFGLPAEKAAINSNIHPRIWTEKNIAKMRTSLKSIGLSYDWSRELSTCSPKYYEHEQKFFLAFLKAGLAYRKNSEVNWDPIDKTVLANEQVIDGRGWRSGAVVVKRKIPQWFLKISDFSEELLKGLESLTGWPEKVKTMQTNWIGKSEGAVIKFSISGYEERFIEVFTTRPETIFGASFCAISVNHPLVNELNLLSNAEREILRIQTTCESDHYDDNKNFSGTTNLEKVHEQKLGILTKIKVKHPFSGDELPLYVANFVFAEYGSGAIFGCPAHDTRDFAFAQQYNLPCLRVISAKCTNTALPYCLEEGVMCNSNFLDGMQVIEARKFIIEKISSIGIGEAKNSYRLRDWGISRQRYWGCPIPVVYCEKCSMQPVKVEDLPVTLPEEVEFTVQGNPLEHHPTWKYTNCPKCGGPAVRDTDTFDTFFESSWYFAAFCSKEGGIVKESCKRFLPVDMYIGGIEHAILHLLYARFFTRALNKCGYIDIVEPFRNLLTQGMVCHETYQNSSGEYLYPEEAKSLLEKGEKVLVGKIEKMSKSKKNVVDLEEIVSKYGADAARFFILSDNPPENSFGWSDRGINASFKFLQRIKNLVERYLSSKNSGEVQTGQNVKIQINKIICDMTKYMDEIKLNCAVAKIHELVNLLSASGALSKETIHVLLRILEPFAPHLAEYLASKLENNVILYGSPWVAYNEVLTQSDAVTLMVRKNGKFVQLLEVKKDSSEEEIISQAKRLIKNAVVDKVIYVPGKMVNFLCSSPG</sequence>
<evidence type="ECO:0000255" key="1">
    <source>
        <dbReference type="HAMAP-Rule" id="MF_00049"/>
    </source>
</evidence>
<evidence type="ECO:0000305" key="2"/>
<protein>
    <recommendedName>
        <fullName evidence="1">Leucine--tRNA ligase</fullName>
        <ecNumber evidence="1">6.1.1.4</ecNumber>
    </recommendedName>
    <alternativeName>
        <fullName evidence="1">Leucyl-tRNA synthetase</fullName>
        <shortName evidence="1">LeuRS</shortName>
    </alternativeName>
</protein>
<feature type="chain" id="PRO_0000334782" description="Leucine--tRNA ligase">
    <location>
        <begin position="1"/>
        <end position="831"/>
    </location>
</feature>
<feature type="short sequence motif" description="'HIGH' region">
    <location>
        <begin position="36"/>
        <end position="46"/>
    </location>
</feature>
<feature type="short sequence motif" description="'KMSKS' region">
    <location>
        <begin position="607"/>
        <end position="611"/>
    </location>
</feature>
<feature type="binding site" evidence="1">
    <location>
        <position position="610"/>
    </location>
    <ligand>
        <name>ATP</name>
        <dbReference type="ChEBI" id="CHEBI:30616"/>
    </ligand>
</feature>
<comment type="catalytic activity">
    <reaction evidence="1">
        <text>tRNA(Leu) + L-leucine + ATP = L-leucyl-tRNA(Leu) + AMP + diphosphate</text>
        <dbReference type="Rhea" id="RHEA:11688"/>
        <dbReference type="Rhea" id="RHEA-COMP:9613"/>
        <dbReference type="Rhea" id="RHEA-COMP:9622"/>
        <dbReference type="ChEBI" id="CHEBI:30616"/>
        <dbReference type="ChEBI" id="CHEBI:33019"/>
        <dbReference type="ChEBI" id="CHEBI:57427"/>
        <dbReference type="ChEBI" id="CHEBI:78442"/>
        <dbReference type="ChEBI" id="CHEBI:78494"/>
        <dbReference type="ChEBI" id="CHEBI:456215"/>
        <dbReference type="EC" id="6.1.1.4"/>
    </reaction>
</comment>
<comment type="subcellular location">
    <subcellularLocation>
        <location evidence="1">Cytoplasm</location>
    </subcellularLocation>
</comment>
<comment type="similarity">
    <text evidence="1">Belongs to the class-I aminoacyl-tRNA synthetase family.</text>
</comment>
<comment type="sequence caution" evidence="2">
    <conflict type="erroneous initiation">
        <sequence resource="EMBL-CDS" id="ABD46464"/>
    </conflict>
</comment>
<reference key="1">
    <citation type="journal article" date="2006" name="PLoS Genet.">
        <title>Comparative genomics of emerging human ehrlichiosis agents.</title>
        <authorList>
            <person name="Dunning Hotopp J.C."/>
            <person name="Lin M."/>
            <person name="Madupu R."/>
            <person name="Crabtree J."/>
            <person name="Angiuoli S.V."/>
            <person name="Eisen J.A."/>
            <person name="Seshadri R."/>
            <person name="Ren Q."/>
            <person name="Wu M."/>
            <person name="Utterback T.R."/>
            <person name="Smith S."/>
            <person name="Lewis M."/>
            <person name="Khouri H."/>
            <person name="Zhang C."/>
            <person name="Niu H."/>
            <person name="Lin Q."/>
            <person name="Ohashi N."/>
            <person name="Zhi N."/>
            <person name="Nelson W.C."/>
            <person name="Brinkac L.M."/>
            <person name="Dodson R.J."/>
            <person name="Rosovitz M.J."/>
            <person name="Sundaram J.P."/>
            <person name="Daugherty S.C."/>
            <person name="Davidsen T."/>
            <person name="Durkin A.S."/>
            <person name="Gwinn M.L."/>
            <person name="Haft D.H."/>
            <person name="Selengut J.D."/>
            <person name="Sullivan S.A."/>
            <person name="Zafar N."/>
            <person name="Zhou L."/>
            <person name="Benahmed F."/>
            <person name="Forberger H."/>
            <person name="Halpin R."/>
            <person name="Mulligan S."/>
            <person name="Robinson J."/>
            <person name="White O."/>
            <person name="Rikihisa Y."/>
            <person name="Tettelin H."/>
        </authorList>
    </citation>
    <scope>NUCLEOTIDE SEQUENCE [LARGE SCALE GENOMIC DNA]</scope>
    <source>
        <strain>ATCC VR-367 / Miyayama</strain>
    </source>
</reference>
<organism>
    <name type="scientific">Neorickettsia sennetsu (strain ATCC VR-367 / Miyayama)</name>
    <name type="common">Ehrlichia sennetsu</name>
    <dbReference type="NCBI Taxonomy" id="222891"/>
    <lineage>
        <taxon>Bacteria</taxon>
        <taxon>Pseudomonadati</taxon>
        <taxon>Pseudomonadota</taxon>
        <taxon>Alphaproteobacteria</taxon>
        <taxon>Rickettsiales</taxon>
        <taxon>Anaplasmataceae</taxon>
        <taxon>Neorickettsia</taxon>
    </lineage>
</organism>
<keyword id="KW-0030">Aminoacyl-tRNA synthetase</keyword>
<keyword id="KW-0067">ATP-binding</keyword>
<keyword id="KW-0963">Cytoplasm</keyword>
<keyword id="KW-0436">Ligase</keyword>
<keyword id="KW-0547">Nucleotide-binding</keyword>
<keyword id="KW-0648">Protein biosynthesis</keyword>
<dbReference type="EC" id="6.1.1.4" evidence="1"/>
<dbReference type="EMBL" id="CP000237">
    <property type="protein sequence ID" value="ABD46464.1"/>
    <property type="status" value="ALT_INIT"/>
    <property type="molecule type" value="Genomic_DNA"/>
</dbReference>
<dbReference type="RefSeq" id="WP_041917503.1">
    <property type="nucleotide sequence ID" value="NC_007798.1"/>
</dbReference>
<dbReference type="SMR" id="Q2GDQ6"/>
<dbReference type="STRING" id="222891.NSE_0506"/>
<dbReference type="KEGG" id="nse:NSE_0506"/>
<dbReference type="eggNOG" id="COG0495">
    <property type="taxonomic scope" value="Bacteria"/>
</dbReference>
<dbReference type="HOGENOM" id="CLU_004427_0_0_5"/>
<dbReference type="OrthoDB" id="9810365at2"/>
<dbReference type="Proteomes" id="UP000001942">
    <property type="component" value="Chromosome"/>
</dbReference>
<dbReference type="GO" id="GO:0005737">
    <property type="term" value="C:cytoplasm"/>
    <property type="evidence" value="ECO:0007669"/>
    <property type="project" value="UniProtKB-SubCell"/>
</dbReference>
<dbReference type="GO" id="GO:0002161">
    <property type="term" value="F:aminoacyl-tRNA deacylase activity"/>
    <property type="evidence" value="ECO:0007669"/>
    <property type="project" value="InterPro"/>
</dbReference>
<dbReference type="GO" id="GO:0005524">
    <property type="term" value="F:ATP binding"/>
    <property type="evidence" value="ECO:0007669"/>
    <property type="project" value="UniProtKB-UniRule"/>
</dbReference>
<dbReference type="GO" id="GO:0004823">
    <property type="term" value="F:leucine-tRNA ligase activity"/>
    <property type="evidence" value="ECO:0007669"/>
    <property type="project" value="UniProtKB-UniRule"/>
</dbReference>
<dbReference type="GO" id="GO:0006429">
    <property type="term" value="P:leucyl-tRNA aminoacylation"/>
    <property type="evidence" value="ECO:0007669"/>
    <property type="project" value="UniProtKB-UniRule"/>
</dbReference>
<dbReference type="CDD" id="cd00812">
    <property type="entry name" value="LeuRS_core"/>
    <property type="match status" value="1"/>
</dbReference>
<dbReference type="FunFam" id="1.10.730.10:FF:000002">
    <property type="entry name" value="Leucine--tRNA ligase"/>
    <property type="match status" value="1"/>
</dbReference>
<dbReference type="FunFam" id="3.40.50.620:FF:000003">
    <property type="entry name" value="Leucine--tRNA ligase"/>
    <property type="match status" value="1"/>
</dbReference>
<dbReference type="Gene3D" id="3.40.50.620">
    <property type="entry name" value="HUPs"/>
    <property type="match status" value="2"/>
</dbReference>
<dbReference type="Gene3D" id="1.10.730.10">
    <property type="entry name" value="Isoleucyl-tRNA Synthetase, Domain 1"/>
    <property type="match status" value="2"/>
</dbReference>
<dbReference type="HAMAP" id="MF_00049_B">
    <property type="entry name" value="Leu_tRNA_synth_B"/>
    <property type="match status" value="1"/>
</dbReference>
<dbReference type="InterPro" id="IPR001412">
    <property type="entry name" value="aa-tRNA-synth_I_CS"/>
</dbReference>
<dbReference type="InterPro" id="IPR002300">
    <property type="entry name" value="aa-tRNA-synth_Ia"/>
</dbReference>
<dbReference type="InterPro" id="IPR002302">
    <property type="entry name" value="Leu-tRNA-ligase"/>
</dbReference>
<dbReference type="InterPro" id="IPR025709">
    <property type="entry name" value="Leu_tRNA-synth_edit"/>
</dbReference>
<dbReference type="InterPro" id="IPR013155">
    <property type="entry name" value="M/V/L/I-tRNA-synth_anticd-bd"/>
</dbReference>
<dbReference type="InterPro" id="IPR015413">
    <property type="entry name" value="Methionyl/Leucyl_tRNA_Synth"/>
</dbReference>
<dbReference type="InterPro" id="IPR014729">
    <property type="entry name" value="Rossmann-like_a/b/a_fold"/>
</dbReference>
<dbReference type="InterPro" id="IPR009080">
    <property type="entry name" value="tRNAsynth_Ia_anticodon-bd"/>
</dbReference>
<dbReference type="InterPro" id="IPR009008">
    <property type="entry name" value="Val/Leu/Ile-tRNA-synth_edit"/>
</dbReference>
<dbReference type="NCBIfam" id="TIGR00396">
    <property type="entry name" value="leuS_bact"/>
    <property type="match status" value="1"/>
</dbReference>
<dbReference type="PANTHER" id="PTHR43740:SF2">
    <property type="entry name" value="LEUCINE--TRNA LIGASE, MITOCHONDRIAL"/>
    <property type="match status" value="1"/>
</dbReference>
<dbReference type="PANTHER" id="PTHR43740">
    <property type="entry name" value="LEUCYL-TRNA SYNTHETASE"/>
    <property type="match status" value="1"/>
</dbReference>
<dbReference type="Pfam" id="PF08264">
    <property type="entry name" value="Anticodon_1"/>
    <property type="match status" value="1"/>
</dbReference>
<dbReference type="Pfam" id="PF00133">
    <property type="entry name" value="tRNA-synt_1"/>
    <property type="match status" value="2"/>
</dbReference>
<dbReference type="Pfam" id="PF13603">
    <property type="entry name" value="tRNA-synt_1_2"/>
    <property type="match status" value="1"/>
</dbReference>
<dbReference type="Pfam" id="PF09334">
    <property type="entry name" value="tRNA-synt_1g"/>
    <property type="match status" value="1"/>
</dbReference>
<dbReference type="PRINTS" id="PR00985">
    <property type="entry name" value="TRNASYNTHLEU"/>
</dbReference>
<dbReference type="SUPFAM" id="SSF47323">
    <property type="entry name" value="Anticodon-binding domain of a subclass of class I aminoacyl-tRNA synthetases"/>
    <property type="match status" value="1"/>
</dbReference>
<dbReference type="SUPFAM" id="SSF52374">
    <property type="entry name" value="Nucleotidylyl transferase"/>
    <property type="match status" value="1"/>
</dbReference>
<dbReference type="SUPFAM" id="SSF50677">
    <property type="entry name" value="ValRS/IleRS/LeuRS editing domain"/>
    <property type="match status" value="1"/>
</dbReference>
<dbReference type="PROSITE" id="PS00178">
    <property type="entry name" value="AA_TRNA_LIGASE_I"/>
    <property type="match status" value="1"/>
</dbReference>